<dbReference type="EMBL" id="U00039">
    <property type="protein sequence ID" value="AAB18446.1"/>
    <property type="molecule type" value="Genomic_DNA"/>
</dbReference>
<dbReference type="EMBL" id="U00096">
    <property type="protein sequence ID" value="AAC76496.1"/>
    <property type="molecule type" value="Genomic_DNA"/>
</dbReference>
<dbReference type="EMBL" id="AP009048">
    <property type="protein sequence ID" value="BAE77822.1"/>
    <property type="molecule type" value="Genomic_DNA"/>
</dbReference>
<dbReference type="PIR" id="S47690">
    <property type="entry name" value="S47690"/>
</dbReference>
<dbReference type="RefSeq" id="NP_417928.1">
    <property type="nucleotide sequence ID" value="NC_000913.3"/>
</dbReference>
<dbReference type="RefSeq" id="WP_001100469.1">
    <property type="nucleotide sequence ID" value="NZ_SSZK01000008.1"/>
</dbReference>
<dbReference type="FunCoup" id="P37619">
    <property type="interactions" value="24"/>
</dbReference>
<dbReference type="STRING" id="511145.b3471"/>
<dbReference type="PaxDb" id="511145-b3471"/>
<dbReference type="EnsemblBacteria" id="AAC76496">
    <property type="protein sequence ID" value="AAC76496"/>
    <property type="gene ID" value="b3471"/>
</dbReference>
<dbReference type="GeneID" id="947984"/>
<dbReference type="KEGG" id="ecj:JW3436"/>
<dbReference type="KEGG" id="eco:b3471"/>
<dbReference type="KEGG" id="ecoc:C3026_18800"/>
<dbReference type="PATRIC" id="fig|1411691.4.peg.3254"/>
<dbReference type="EchoBASE" id="EB2131"/>
<dbReference type="eggNOG" id="COG1738">
    <property type="taxonomic scope" value="Bacteria"/>
</dbReference>
<dbReference type="HOGENOM" id="CLU_090905_0_0_6"/>
<dbReference type="InParanoid" id="P37619"/>
<dbReference type="OMA" id="IWLSLFH"/>
<dbReference type="OrthoDB" id="7065604at2"/>
<dbReference type="PhylomeDB" id="P37619"/>
<dbReference type="BioCyc" id="EcoCyc:EG12217-MONOMER"/>
<dbReference type="BioCyc" id="MetaCyc:EG12217-MONOMER"/>
<dbReference type="PRO" id="PR:P37619"/>
<dbReference type="Proteomes" id="UP000000625">
    <property type="component" value="Chromosome"/>
</dbReference>
<dbReference type="GO" id="GO:0005886">
    <property type="term" value="C:plasma membrane"/>
    <property type="evidence" value="ECO:0000314"/>
    <property type="project" value="EcoCyc"/>
</dbReference>
<dbReference type="GO" id="GO:0022857">
    <property type="term" value="F:transmembrane transporter activity"/>
    <property type="evidence" value="ECO:0007669"/>
    <property type="project" value="UniProtKB-UniRule"/>
</dbReference>
<dbReference type="GO" id="GO:0072531">
    <property type="term" value="P:pyrimidine-containing compound transmembrane transport"/>
    <property type="evidence" value="ECO:0000314"/>
    <property type="project" value="EcoCyc"/>
</dbReference>
<dbReference type="GO" id="GO:1990397">
    <property type="term" value="P:queuosine salvage"/>
    <property type="evidence" value="ECO:0000314"/>
    <property type="project" value="EcoCyc"/>
</dbReference>
<dbReference type="HAMAP" id="MF_02088">
    <property type="entry name" value="Q_prec_transport"/>
    <property type="match status" value="1"/>
</dbReference>
<dbReference type="InterPro" id="IPR003744">
    <property type="entry name" value="YhhQ"/>
</dbReference>
<dbReference type="NCBIfam" id="NF008406">
    <property type="entry name" value="PRK11212.1"/>
    <property type="match status" value="1"/>
</dbReference>
<dbReference type="NCBIfam" id="TIGR00697">
    <property type="entry name" value="queuosine precursor transporter"/>
    <property type="match status" value="1"/>
</dbReference>
<dbReference type="PANTHER" id="PTHR34300:SF1">
    <property type="entry name" value="QUEUOSINE PRECURSOR TRANSPORTER"/>
    <property type="match status" value="1"/>
</dbReference>
<dbReference type="PANTHER" id="PTHR34300">
    <property type="entry name" value="QUEUOSINE PRECURSOR TRANSPORTER-RELATED"/>
    <property type="match status" value="1"/>
</dbReference>
<dbReference type="Pfam" id="PF02592">
    <property type="entry name" value="Vut_1"/>
    <property type="match status" value="1"/>
</dbReference>
<proteinExistence type="evidence at protein level"/>
<protein>
    <recommendedName>
        <fullName evidence="4">Queuosine precursor transporter</fullName>
        <shortName evidence="1 4">Q precursor transporter</shortName>
    </recommendedName>
</protein>
<accession>P37619</accession>
<accession>Q2M7D4</accession>
<gene>
    <name type="primary">yhhQ</name>
    <name type="ordered locus">b3471</name>
    <name type="ordered locus">JW3436</name>
</gene>
<evidence type="ECO:0000255" key="1">
    <source>
        <dbReference type="HAMAP-Rule" id="MF_02088"/>
    </source>
</evidence>
<evidence type="ECO:0000269" key="2">
    <source>
    </source>
</evidence>
<evidence type="ECO:0000269" key="3">
    <source>
    </source>
</evidence>
<evidence type="ECO:0000305" key="4"/>
<reference key="1">
    <citation type="journal article" date="1994" name="Nucleic Acids Res.">
        <title>Analysis of the Escherichia coli genome. V. DNA sequence of the region from 76.0 to 81.5 minutes.</title>
        <authorList>
            <person name="Sofia H.J."/>
            <person name="Burland V."/>
            <person name="Daniels D.L."/>
            <person name="Plunkett G. III"/>
            <person name="Blattner F.R."/>
        </authorList>
    </citation>
    <scope>NUCLEOTIDE SEQUENCE [LARGE SCALE GENOMIC DNA]</scope>
    <source>
        <strain>K12 / MG1655 / ATCC 47076</strain>
    </source>
</reference>
<reference key="2">
    <citation type="journal article" date="1997" name="Science">
        <title>The complete genome sequence of Escherichia coli K-12.</title>
        <authorList>
            <person name="Blattner F.R."/>
            <person name="Plunkett G. III"/>
            <person name="Bloch C.A."/>
            <person name="Perna N.T."/>
            <person name="Burland V."/>
            <person name="Riley M."/>
            <person name="Collado-Vides J."/>
            <person name="Glasner J.D."/>
            <person name="Rode C.K."/>
            <person name="Mayhew G.F."/>
            <person name="Gregor J."/>
            <person name="Davis N.W."/>
            <person name="Kirkpatrick H.A."/>
            <person name="Goeden M.A."/>
            <person name="Rose D.J."/>
            <person name="Mau B."/>
            <person name="Shao Y."/>
        </authorList>
    </citation>
    <scope>NUCLEOTIDE SEQUENCE [LARGE SCALE GENOMIC DNA]</scope>
    <source>
        <strain>K12 / MG1655 / ATCC 47076</strain>
    </source>
</reference>
<reference key="3">
    <citation type="journal article" date="2006" name="Mol. Syst. Biol.">
        <title>Highly accurate genome sequences of Escherichia coli K-12 strains MG1655 and W3110.</title>
        <authorList>
            <person name="Hayashi K."/>
            <person name="Morooka N."/>
            <person name="Yamamoto Y."/>
            <person name="Fujita K."/>
            <person name="Isono K."/>
            <person name="Choi S."/>
            <person name="Ohtsubo E."/>
            <person name="Baba T."/>
            <person name="Wanner B.L."/>
            <person name="Mori H."/>
            <person name="Horiuchi T."/>
        </authorList>
    </citation>
    <scope>NUCLEOTIDE SEQUENCE [LARGE SCALE GENOMIC DNA]</scope>
    <source>
        <strain>K12 / W3110 / ATCC 27325 / DSM 5911</strain>
    </source>
</reference>
<reference key="4">
    <citation type="journal article" date="2005" name="Science">
        <title>Global topology analysis of the Escherichia coli inner membrane proteome.</title>
        <authorList>
            <person name="Daley D.O."/>
            <person name="Rapp M."/>
            <person name="Granseth E."/>
            <person name="Melen K."/>
            <person name="Drew D."/>
            <person name="von Heijne G."/>
        </authorList>
    </citation>
    <scope>TOPOLOGY [LARGE SCALE ANALYSIS]</scope>
    <scope>SUBCELLULAR LOCATION</scope>
    <source>
        <strain>K12 / MG1655 / ATCC 47076</strain>
    </source>
</reference>
<reference key="5">
    <citation type="journal article" date="2017" name="Biomolecules">
        <title>The Escherichia coli COG1738 member YhhQ is involved in 7-cyanodeazaguanine (preQ(0)) transport.</title>
        <authorList>
            <person name="Zallot R."/>
            <person name="Yuan Y."/>
            <person name="de Crecy-Lagard V."/>
        </authorList>
    </citation>
    <scope>FUNCTION</scope>
    <scope>DISRUPTION PHENOTYPE</scope>
</reference>
<comment type="function">
    <text evidence="3">Involved in the import of queuosine (Q) precursors, required for Q precursor salvage. Transports 7-cyano-7-deazaguanine (preQ(0)) and 7-aminomethyl-7-deazaguanine (preQ(1)), with a preference for preQ(0).</text>
</comment>
<comment type="subcellular location">
    <subcellularLocation>
        <location evidence="1 2">Cell inner membrane</location>
        <topology evidence="1">Multi-pass membrane protein</topology>
    </subcellularLocation>
</comment>
<comment type="disruption phenotype">
    <text evidence="3">YhhQ-queD double mutant cannot produce Q modified tRNA in minimal media with preQ(0) or preQ(1). YhhQ expressed from a plasmid restores the presence of Q modified tRNA.</text>
</comment>
<comment type="similarity">
    <text evidence="1 4">Belongs to the vitamin uptake transporter (VUT/ECF) (TC 2.A.88) family. Q precursor transporter subfamily.</text>
</comment>
<sequence>MNVFSQTQRYKALFWLSLFHLLVITSSNYLVQLPVSILGFHTTWGAFSFPFIFLATDLTVRIFGAPLARRIIFAVMIPALLISYVISSLFYMGSWQGFGALAHFNLFVARIATASFMAYALGQILDVHVFNRLRQSRRWWLAPTASTLFGNVSDTLAFFFIAFWRSPDAFMAEHWMEIALVDYCFKVLISIVFFLPMYGVLLNMLLKRLADKSEINALQAS</sequence>
<name>QPTR_ECOLI</name>
<keyword id="KW-0997">Cell inner membrane</keyword>
<keyword id="KW-1003">Cell membrane</keyword>
<keyword id="KW-0472">Membrane</keyword>
<keyword id="KW-1185">Reference proteome</keyword>
<keyword id="KW-0812">Transmembrane</keyword>
<keyword id="KW-1133">Transmembrane helix</keyword>
<keyword id="KW-0813">Transport</keyword>
<organism>
    <name type="scientific">Escherichia coli (strain K12)</name>
    <dbReference type="NCBI Taxonomy" id="83333"/>
    <lineage>
        <taxon>Bacteria</taxon>
        <taxon>Pseudomonadati</taxon>
        <taxon>Pseudomonadota</taxon>
        <taxon>Gammaproteobacteria</taxon>
        <taxon>Enterobacterales</taxon>
        <taxon>Enterobacteriaceae</taxon>
        <taxon>Escherichia</taxon>
    </lineage>
</organism>
<feature type="chain" id="PRO_0000169556" description="Queuosine precursor transporter">
    <location>
        <begin position="1"/>
        <end position="221"/>
    </location>
</feature>
<feature type="topological domain" description="Cytoplasmic" evidence="4">
    <location>
        <begin position="1"/>
        <end position="12"/>
    </location>
</feature>
<feature type="transmembrane region" description="Helical" evidence="1">
    <location>
        <begin position="13"/>
        <end position="33"/>
    </location>
</feature>
<feature type="topological domain" description="Periplasmic" evidence="4">
    <location>
        <position position="34"/>
    </location>
</feature>
<feature type="transmembrane region" description="Helical" evidence="1">
    <location>
        <begin position="35"/>
        <end position="55"/>
    </location>
</feature>
<feature type="topological domain" description="Cytoplasmic" evidence="4">
    <location>
        <begin position="56"/>
        <end position="70"/>
    </location>
</feature>
<feature type="transmembrane region" description="Helical" evidence="1">
    <location>
        <begin position="71"/>
        <end position="91"/>
    </location>
</feature>
<feature type="topological domain" description="Periplasmic" evidence="4">
    <location>
        <begin position="92"/>
        <end position="97"/>
    </location>
</feature>
<feature type="transmembrane region" description="Helical" evidence="1">
    <location>
        <begin position="98"/>
        <end position="118"/>
    </location>
</feature>
<feature type="topological domain" description="Cytoplasmic" evidence="4">
    <location>
        <begin position="119"/>
        <end position="143"/>
    </location>
</feature>
<feature type="transmembrane region" description="Helical" evidence="1">
    <location>
        <begin position="144"/>
        <end position="164"/>
    </location>
</feature>
<feature type="topological domain" description="Periplasmic" evidence="4">
    <location>
        <begin position="165"/>
        <end position="184"/>
    </location>
</feature>
<feature type="transmembrane region" description="Helical" evidence="1">
    <location>
        <begin position="185"/>
        <end position="205"/>
    </location>
</feature>
<feature type="topological domain" description="Cytoplasmic" evidence="2">
    <location>
        <begin position="206"/>
        <end position="221"/>
    </location>
</feature>